<proteinExistence type="inferred from homology"/>
<keyword id="KW-0235">DNA replication</keyword>
<keyword id="KW-0238">DNA-binding</keyword>
<keyword id="KW-0239">DNA-directed DNA polymerase</keyword>
<keyword id="KW-0548">Nucleotidyltransferase</keyword>
<keyword id="KW-0808">Transferase</keyword>
<keyword id="KW-1194">Viral DNA replication</keyword>
<comment type="catalytic activity">
    <reaction>
        <text>DNA(n) + a 2'-deoxyribonucleoside 5'-triphosphate = DNA(n+1) + diphosphate</text>
        <dbReference type="Rhea" id="RHEA:22508"/>
        <dbReference type="Rhea" id="RHEA-COMP:17339"/>
        <dbReference type="Rhea" id="RHEA-COMP:17340"/>
        <dbReference type="ChEBI" id="CHEBI:33019"/>
        <dbReference type="ChEBI" id="CHEBI:61560"/>
        <dbReference type="ChEBI" id="CHEBI:173112"/>
        <dbReference type="EC" id="2.7.7.7"/>
    </reaction>
</comment>
<comment type="similarity">
    <text evidence="1">Belongs to the DNA polymerase type-B family.</text>
</comment>
<organism>
    <name type="scientific">Red sea bream iridovirus</name>
    <name type="common">RSIV</name>
    <dbReference type="NCBI Taxonomy" id="65424"/>
    <lineage>
        <taxon>Viruses</taxon>
        <taxon>Varidnaviria</taxon>
        <taxon>Bamfordvirae</taxon>
        <taxon>Nucleocytoviricota</taxon>
        <taxon>Megaviricetes</taxon>
        <taxon>Pimascovirales</taxon>
        <taxon>Iridoviridae</taxon>
        <taxon>Alphairidovirinae</taxon>
        <taxon>Megalocytivirus</taxon>
        <taxon>Infectious spleen and kidney necrosis virus</taxon>
    </lineage>
</organism>
<dbReference type="EC" id="2.7.7.7"/>
<dbReference type="EMBL" id="AB007366">
    <property type="protein sequence ID" value="BAA28669.1"/>
    <property type="molecule type" value="Genomic_DNA"/>
</dbReference>
<dbReference type="SMR" id="O70736"/>
<dbReference type="GO" id="GO:0008296">
    <property type="term" value="F:3'-5'-DNA exonuclease activity"/>
    <property type="evidence" value="ECO:0007669"/>
    <property type="project" value="TreeGrafter"/>
</dbReference>
<dbReference type="GO" id="GO:0003677">
    <property type="term" value="F:DNA binding"/>
    <property type="evidence" value="ECO:0007669"/>
    <property type="project" value="UniProtKB-KW"/>
</dbReference>
<dbReference type="GO" id="GO:0003887">
    <property type="term" value="F:DNA-directed DNA polymerase activity"/>
    <property type="evidence" value="ECO:0007669"/>
    <property type="project" value="UniProtKB-KW"/>
</dbReference>
<dbReference type="GO" id="GO:0000166">
    <property type="term" value="F:nucleotide binding"/>
    <property type="evidence" value="ECO:0007669"/>
    <property type="project" value="InterPro"/>
</dbReference>
<dbReference type="GO" id="GO:0006287">
    <property type="term" value="P:base-excision repair, gap-filling"/>
    <property type="evidence" value="ECO:0007669"/>
    <property type="project" value="TreeGrafter"/>
</dbReference>
<dbReference type="GO" id="GO:0045004">
    <property type="term" value="P:DNA replication proofreading"/>
    <property type="evidence" value="ECO:0007669"/>
    <property type="project" value="TreeGrafter"/>
</dbReference>
<dbReference type="GO" id="GO:0006297">
    <property type="term" value="P:nucleotide-excision repair, DNA gap filling"/>
    <property type="evidence" value="ECO:0007669"/>
    <property type="project" value="TreeGrafter"/>
</dbReference>
<dbReference type="GO" id="GO:0039693">
    <property type="term" value="P:viral DNA genome replication"/>
    <property type="evidence" value="ECO:0007669"/>
    <property type="project" value="UniProtKB-KW"/>
</dbReference>
<dbReference type="Gene3D" id="1.10.132.60">
    <property type="entry name" value="DNA polymerase family B, C-terminal domain"/>
    <property type="match status" value="1"/>
</dbReference>
<dbReference type="Gene3D" id="1.10.287.690">
    <property type="entry name" value="Helix hairpin bin"/>
    <property type="match status" value="1"/>
</dbReference>
<dbReference type="Gene3D" id="3.90.1600.10">
    <property type="entry name" value="Palm domain of DNA polymerase"/>
    <property type="match status" value="1"/>
</dbReference>
<dbReference type="Gene3D" id="3.30.420.10">
    <property type="entry name" value="Ribonuclease H-like superfamily/Ribonuclease H"/>
    <property type="match status" value="1"/>
</dbReference>
<dbReference type="InterPro" id="IPR006172">
    <property type="entry name" value="DNA-dir_DNA_pol_B"/>
</dbReference>
<dbReference type="InterPro" id="IPR017964">
    <property type="entry name" value="DNA-dir_DNA_pol_B_CS"/>
</dbReference>
<dbReference type="InterPro" id="IPR006133">
    <property type="entry name" value="DNA-dir_DNA_pol_B_exonuc"/>
</dbReference>
<dbReference type="InterPro" id="IPR006134">
    <property type="entry name" value="DNA-dir_DNA_pol_B_multi_dom"/>
</dbReference>
<dbReference type="InterPro" id="IPR043502">
    <property type="entry name" value="DNA/RNA_pol_sf"/>
</dbReference>
<dbReference type="InterPro" id="IPR042087">
    <property type="entry name" value="DNA_pol_B_thumb"/>
</dbReference>
<dbReference type="InterPro" id="IPR023211">
    <property type="entry name" value="DNA_pol_palm_dom_sf"/>
</dbReference>
<dbReference type="InterPro" id="IPR050240">
    <property type="entry name" value="DNA_pol_type-B"/>
</dbReference>
<dbReference type="InterPro" id="IPR012337">
    <property type="entry name" value="RNaseH-like_sf"/>
</dbReference>
<dbReference type="InterPro" id="IPR036397">
    <property type="entry name" value="RNaseH_sf"/>
</dbReference>
<dbReference type="PANTHER" id="PTHR10322">
    <property type="entry name" value="DNA POLYMERASE CATALYTIC SUBUNIT"/>
    <property type="match status" value="1"/>
</dbReference>
<dbReference type="PANTHER" id="PTHR10322:SF23">
    <property type="entry name" value="DNA POLYMERASE DELTA CATALYTIC SUBUNIT"/>
    <property type="match status" value="1"/>
</dbReference>
<dbReference type="Pfam" id="PF00136">
    <property type="entry name" value="DNA_pol_B"/>
    <property type="match status" value="1"/>
</dbReference>
<dbReference type="Pfam" id="PF03104">
    <property type="entry name" value="DNA_pol_B_exo1"/>
    <property type="match status" value="1"/>
</dbReference>
<dbReference type="PRINTS" id="PR00106">
    <property type="entry name" value="DNAPOLB"/>
</dbReference>
<dbReference type="SMART" id="SM00486">
    <property type="entry name" value="POLBc"/>
    <property type="match status" value="1"/>
</dbReference>
<dbReference type="SUPFAM" id="SSF56672">
    <property type="entry name" value="DNA/RNA polymerases"/>
    <property type="match status" value="1"/>
</dbReference>
<dbReference type="SUPFAM" id="SSF53098">
    <property type="entry name" value="Ribonuclease H-like"/>
    <property type="match status" value="1"/>
</dbReference>
<dbReference type="PROSITE" id="PS00116">
    <property type="entry name" value="DNA_POLYMERASE_B"/>
    <property type="match status" value="1"/>
</dbReference>
<sequence length="947" mass="107025">MDSVYIYQWLYANYEVRGYGIALNNTVVCVRVPNFKQVVYVECTDPQHDPRSTFTQHGFRVYETPRACSLYGAKGVGTYFAARVPNYNAMRDVQETQGPFKIHESRVSKTMEFTARAGLPTVGWIQVSQRCVVTRTVTMAAKEYMVPNWRTDVRPAPDIEGVPPAKIVYFDIEVKSDHENVFPSDRDDEVIFQIGLVLCSGTTVLRTDLLSLPGRDYDASVYQYATEGELLHAFIAYIREHEVVAVCGYNIMGFDIPYIIKRCARTSMLGTFKRIGWDSHRLAIEKTAGVGHAKMTYIQWEGVLTIDLMPIIMMDHKLDSYSLDYVANHFVKAGKDPIRPRDIFHAYNTGLMARVGRYCVKDTQLCKQLVDYLNTWVALCEMAGVCNTSIMQLFTQGQQVRVFAQIYRDCTPMDVVDKVYVIPDGGCDSDVVSPSSYTGAYVYEPVPGVYKNVIPMDFQSLYPSIIISKNICYSTLVDQGGEEYAWQEHEGCEHDPQYAKQHALGVEIGVLQCNMAALPRRATQERARMRERISEMKIQYASMTPSVVKCNVFSFRFTHAHEGVLPRVLRNLLESRARVRARIKTTDDPDIRAVLDKKQLAYKISANSVYGTMGTQRGYLPFMAGAMTTTYCGRKLIEKAAHLLKTVVGATIVYGDTDSCYIQLGHDRASLDELWQMAVNASDTVSAFFERPVRLEFEQCIYTKFIIFTKKRYVYRAFTRDGKQRTGSKGVMLSRRDSAMCARNTYAAIMSAILEGSADVPFIAVRMMHDMMIPGALQDDDFVLTKSVQDIGNGDDNNHGSYKVRNPQKAQAAATQRVAPDDAEGYAIALRQEMVKQMPAQAQLAERMRLQGRAVVSGARIEYVVLKHQYGVPEGALGARLLDFERWRDMKVAYPLDRLYYMKSVVNACDQLLVTAGYGPVCSKVYAAHLQLAYVHKQLMRRMMPTV</sequence>
<organismHost>
    <name type="scientific">Epinephelus</name>
    <dbReference type="NCBI Taxonomy" id="94231"/>
</organismHost>
<organismHost>
    <name type="scientific">Lateolabrax</name>
    <dbReference type="NCBI Taxonomy" id="8163"/>
</organismHost>
<organismHost>
    <name type="scientific">Seriola</name>
    <dbReference type="NCBI Taxonomy" id="8160"/>
</organismHost>
<organismHost>
    <name type="scientific">Thunnus thynnus</name>
    <name type="common">Atlantic bluefin tuna</name>
    <name type="synonym">Scomber thynnus</name>
    <dbReference type="NCBI Taxonomy" id="8237"/>
</organismHost>
<protein>
    <recommendedName>
        <fullName>DNA polymerase</fullName>
        <ecNumber>2.7.7.7</ecNumber>
    </recommendedName>
</protein>
<name>DPOL_RSIV</name>
<reference key="1">
    <citation type="journal article" date="1998" name="Fish Pathol.">
        <title>Polymerase chain reaction (PCR) amplification of DNA of red sea bream iridovirus (RSIV).</title>
        <authorList>
            <person name="Kurita J."/>
            <person name="Nakajima K."/>
            <person name="Hirono I."/>
            <person name="Aoki T."/>
        </authorList>
    </citation>
    <scope>NUCLEOTIDE SEQUENCE [GENOMIC DNA]</scope>
    <source>
        <strain>Ehime-1</strain>
    </source>
</reference>
<accession>O70736</accession>
<evidence type="ECO:0000305" key="1"/>
<feature type="chain" id="PRO_0000046504" description="DNA polymerase">
    <location>
        <begin position="1"/>
        <end position="947"/>
    </location>
</feature>